<organism>
    <name type="scientific">Escherichia coli O157:H7</name>
    <dbReference type="NCBI Taxonomy" id="83334"/>
    <lineage>
        <taxon>Bacteria</taxon>
        <taxon>Pseudomonadati</taxon>
        <taxon>Pseudomonadota</taxon>
        <taxon>Gammaproteobacteria</taxon>
        <taxon>Enterobacterales</taxon>
        <taxon>Enterobacteriaceae</taxon>
        <taxon>Escherichia</taxon>
    </lineage>
</organism>
<sequence>MSNTYQKRKASKEYGLYNQCKKLNDDELFRLLDDHNSLKRISSARVLQLRGGQDAVRLAIEFCSDKNYIRRDIGAFILGQIKICKKCEDNVFNILNNMALNDKSACVRATAIESTAQRCKKNPIYSPKIVEQSQITAFDKSTNVRRATAFAISVINDKATIPLLINLLKDPNGDVRNWAAFAININKYDNSDIRDCFVEMLQDKNEEVRIEAIIGLSYRKDKRVLSVLCDELKKNTVYDDIIEAAGELGDKTLLPVLDTMLYKFDDNEIITSAIDKLKRS</sequence>
<reference key="1">
    <citation type="journal article" date="2001" name="Nature">
        <title>Genome sequence of enterohaemorrhagic Escherichia coli O157:H7.</title>
        <authorList>
            <person name="Perna N.T."/>
            <person name="Plunkett G. III"/>
            <person name="Burland V."/>
            <person name="Mau B."/>
            <person name="Glasner J.D."/>
            <person name="Rose D.J."/>
            <person name="Mayhew G.F."/>
            <person name="Evans P.S."/>
            <person name="Gregor J."/>
            <person name="Kirkpatrick H.A."/>
            <person name="Posfai G."/>
            <person name="Hackett J."/>
            <person name="Klink S."/>
            <person name="Boutin A."/>
            <person name="Shao Y."/>
            <person name="Miller L."/>
            <person name="Grotbeck E.J."/>
            <person name="Davis N.W."/>
            <person name="Lim A."/>
            <person name="Dimalanta E.T."/>
            <person name="Potamousis K."/>
            <person name="Apodaca J."/>
            <person name="Anantharaman T.S."/>
            <person name="Lin J."/>
            <person name="Yen G."/>
            <person name="Schwartz D.C."/>
            <person name="Welch R.A."/>
            <person name="Blattner F.R."/>
        </authorList>
    </citation>
    <scope>NUCLEOTIDE SEQUENCE [LARGE SCALE GENOMIC DNA]</scope>
    <source>
        <strain>O157:H7 / EDL933 / ATCC 700927 / EHEC</strain>
    </source>
</reference>
<accession>P0ADK7</accession>
<accession>P24172</accession>
<name>YIBA_ECO57</name>
<dbReference type="EMBL" id="AE005174">
    <property type="protein sequence ID" value="AAG58738.1"/>
    <property type="molecule type" value="Genomic_DNA"/>
</dbReference>
<dbReference type="PIR" id="F86034">
    <property type="entry name" value="F86034"/>
</dbReference>
<dbReference type="SMR" id="P0ADK7"/>
<dbReference type="KEGG" id="ece:Z5015"/>
<dbReference type="OMA" id="EDENLAW"/>
<dbReference type="Proteomes" id="UP000002519">
    <property type="component" value="Chromosome"/>
</dbReference>
<dbReference type="GO" id="GO:0016491">
    <property type="term" value="F:oxidoreductase activity"/>
    <property type="evidence" value="ECO:0007669"/>
    <property type="project" value="TreeGrafter"/>
</dbReference>
<dbReference type="Gene3D" id="1.25.10.10">
    <property type="entry name" value="Leucine-rich Repeat Variant"/>
    <property type="match status" value="1"/>
</dbReference>
<dbReference type="InterPro" id="IPR011989">
    <property type="entry name" value="ARM-like"/>
</dbReference>
<dbReference type="InterPro" id="IPR016024">
    <property type="entry name" value="ARM-type_fold"/>
</dbReference>
<dbReference type="NCBIfam" id="NF007244">
    <property type="entry name" value="PRK09687.1"/>
    <property type="match status" value="1"/>
</dbReference>
<dbReference type="PANTHER" id="PTHR12697:SF5">
    <property type="entry name" value="DEOXYHYPUSINE HYDROXYLASE"/>
    <property type="match status" value="1"/>
</dbReference>
<dbReference type="PANTHER" id="PTHR12697">
    <property type="entry name" value="PBS LYASE HEAT-LIKE PROTEIN"/>
    <property type="match status" value="1"/>
</dbReference>
<dbReference type="Pfam" id="PF13646">
    <property type="entry name" value="HEAT_2"/>
    <property type="match status" value="1"/>
</dbReference>
<dbReference type="SUPFAM" id="SSF48371">
    <property type="entry name" value="ARM repeat"/>
    <property type="match status" value="1"/>
</dbReference>
<proteinExistence type="predicted"/>
<gene>
    <name type="primary">yibA</name>
    <name type="ordered locus">Z5015</name>
</gene>
<protein>
    <recommendedName>
        <fullName>Protein YibA</fullName>
    </recommendedName>
</protein>
<feature type="chain" id="PRO_0000169605" description="Protein YibA">
    <location>
        <begin position="1"/>
        <end position="280"/>
    </location>
</feature>